<evidence type="ECO:0000250" key="1"/>
<evidence type="ECO:0000250" key="2">
    <source>
        <dbReference type="UniProtKB" id="A0A0G2K047"/>
    </source>
</evidence>
<evidence type="ECO:0000250" key="3">
    <source>
        <dbReference type="UniProtKB" id="Q14DH7"/>
    </source>
</evidence>
<evidence type="ECO:0000255" key="4"/>
<evidence type="ECO:0000305" key="5"/>
<keyword id="KW-0007">Acetylation</keyword>
<keyword id="KW-0067">ATP-binding</keyword>
<keyword id="KW-0436">Ligase</keyword>
<keyword id="KW-0443">Lipid metabolism</keyword>
<keyword id="KW-0496">Mitochondrion</keyword>
<keyword id="KW-0547">Nucleotide-binding</keyword>
<keyword id="KW-1185">Reference proteome</keyword>
<keyword id="KW-0809">Transit peptide</keyword>
<comment type="function">
    <text evidence="2">Catalyzes the synthesis of acetyl-CoA from short-chain fatty acids (By similarity). Propionate is the preferred substrate but can also utilize acetate and butyrate with a much lower affinity.</text>
</comment>
<comment type="catalytic activity">
    <reaction evidence="2">
        <text>acetate + ATP + CoA = acetyl-CoA + AMP + diphosphate</text>
        <dbReference type="Rhea" id="RHEA:23176"/>
        <dbReference type="ChEBI" id="CHEBI:30089"/>
        <dbReference type="ChEBI" id="CHEBI:30616"/>
        <dbReference type="ChEBI" id="CHEBI:33019"/>
        <dbReference type="ChEBI" id="CHEBI:57287"/>
        <dbReference type="ChEBI" id="CHEBI:57288"/>
        <dbReference type="ChEBI" id="CHEBI:456215"/>
        <dbReference type="EC" id="6.2.1.1"/>
    </reaction>
    <physiologicalReaction direction="left-to-right" evidence="2">
        <dbReference type="Rhea" id="RHEA:23177"/>
    </physiologicalReaction>
</comment>
<comment type="catalytic activity">
    <reaction evidence="2">
        <text>propanoate + ATP + CoA = propanoyl-CoA + AMP + diphosphate</text>
        <dbReference type="Rhea" id="RHEA:20373"/>
        <dbReference type="ChEBI" id="CHEBI:17272"/>
        <dbReference type="ChEBI" id="CHEBI:30616"/>
        <dbReference type="ChEBI" id="CHEBI:33019"/>
        <dbReference type="ChEBI" id="CHEBI:57287"/>
        <dbReference type="ChEBI" id="CHEBI:57392"/>
        <dbReference type="ChEBI" id="CHEBI:456215"/>
        <dbReference type="EC" id="6.2.1.17"/>
    </reaction>
    <physiologicalReaction direction="left-to-right" evidence="2">
        <dbReference type="Rhea" id="RHEA:20374"/>
    </physiologicalReaction>
</comment>
<comment type="catalytic activity">
    <reaction evidence="2">
        <text>butanoate + ATP + CoA = butanoyl-CoA + AMP + diphosphate</text>
        <dbReference type="Rhea" id="RHEA:46172"/>
        <dbReference type="ChEBI" id="CHEBI:17968"/>
        <dbReference type="ChEBI" id="CHEBI:30616"/>
        <dbReference type="ChEBI" id="CHEBI:33019"/>
        <dbReference type="ChEBI" id="CHEBI:57287"/>
        <dbReference type="ChEBI" id="CHEBI:57371"/>
        <dbReference type="ChEBI" id="CHEBI:456215"/>
    </reaction>
    <physiologicalReaction direction="left-to-right" evidence="2">
        <dbReference type="Rhea" id="RHEA:46173"/>
    </physiologicalReaction>
</comment>
<comment type="subcellular location">
    <subcellularLocation>
        <location evidence="2">Mitochondrion matrix</location>
    </subcellularLocation>
</comment>
<comment type="similarity">
    <text evidence="5">Belongs to the ATP-dependent AMP-binding enzyme family.</text>
</comment>
<organism>
    <name type="scientific">Bos taurus</name>
    <name type="common">Bovine</name>
    <dbReference type="NCBI Taxonomy" id="9913"/>
    <lineage>
        <taxon>Eukaryota</taxon>
        <taxon>Metazoa</taxon>
        <taxon>Chordata</taxon>
        <taxon>Craniata</taxon>
        <taxon>Vertebrata</taxon>
        <taxon>Euteleostomi</taxon>
        <taxon>Mammalia</taxon>
        <taxon>Eutheria</taxon>
        <taxon>Laurasiatheria</taxon>
        <taxon>Artiodactyla</taxon>
        <taxon>Ruminantia</taxon>
        <taxon>Pecora</taxon>
        <taxon>Bovidae</taxon>
        <taxon>Bovinae</taxon>
        <taxon>Bos</taxon>
    </lineage>
</organism>
<proteinExistence type="evidence at transcript level"/>
<accession>A7MB45</accession>
<feature type="transit peptide" description="Mitochondrion" evidence="4">
    <location>
        <begin position="1"/>
        <end position="29"/>
    </location>
</feature>
<feature type="chain" id="PRO_0000320623" description="Acyl-CoA synthetase short-chain family member 3, mitochondrial">
    <location>
        <begin position="30"/>
        <end position="686"/>
    </location>
</feature>
<feature type="binding site" evidence="1">
    <location>
        <begin position="226"/>
        <end position="229"/>
    </location>
    <ligand>
        <name>CoA</name>
        <dbReference type="ChEBI" id="CHEBI:57287"/>
    </ligand>
</feature>
<feature type="binding site" evidence="1">
    <location>
        <begin position="424"/>
        <end position="426"/>
    </location>
    <ligand>
        <name>ATP</name>
        <dbReference type="ChEBI" id="CHEBI:30616"/>
    </ligand>
</feature>
<feature type="binding site" evidence="1">
    <location>
        <begin position="445"/>
        <end position="450"/>
    </location>
    <ligand>
        <name>ATP</name>
        <dbReference type="ChEBI" id="CHEBI:30616"/>
    </ligand>
</feature>
<feature type="binding site" evidence="1">
    <location>
        <position position="538"/>
    </location>
    <ligand>
        <name>ATP</name>
        <dbReference type="ChEBI" id="CHEBI:30616"/>
    </ligand>
</feature>
<feature type="binding site" evidence="1">
    <location>
        <position position="553"/>
    </location>
    <ligand>
        <name>ATP</name>
        <dbReference type="ChEBI" id="CHEBI:30616"/>
    </ligand>
</feature>
<feature type="binding site" evidence="1">
    <location>
        <position position="564"/>
    </location>
    <ligand>
        <name>ATP</name>
        <dbReference type="ChEBI" id="CHEBI:30616"/>
    </ligand>
</feature>
<feature type="binding site" evidence="1">
    <location>
        <position position="623"/>
    </location>
    <ligand>
        <name>CoA</name>
        <dbReference type="ChEBI" id="CHEBI:57287"/>
    </ligand>
</feature>
<feature type="modified residue" description="N6-succinyllysine" evidence="3">
    <location>
        <position position="517"/>
    </location>
</feature>
<feature type="modified residue" description="N6-acetyllysine" evidence="3">
    <location>
        <position position="523"/>
    </location>
</feature>
<dbReference type="EC" id="6.2.1.1" evidence="2"/>
<dbReference type="EC" id="6.2.1.17" evidence="2"/>
<dbReference type="EMBL" id="BC151332">
    <property type="protein sequence ID" value="AAI51333.1"/>
    <property type="molecule type" value="mRNA"/>
</dbReference>
<dbReference type="RefSeq" id="NP_001095607.1">
    <property type="nucleotide sequence ID" value="NM_001102137.2"/>
</dbReference>
<dbReference type="RefSeq" id="XP_010803057.2">
    <property type="nucleotide sequence ID" value="XM_010804755.4"/>
</dbReference>
<dbReference type="SMR" id="A7MB45"/>
<dbReference type="FunCoup" id="A7MB45">
    <property type="interactions" value="239"/>
</dbReference>
<dbReference type="STRING" id="9913.ENSBTAP00000024880"/>
<dbReference type="PaxDb" id="9913-ENSBTAP00000024880"/>
<dbReference type="Ensembl" id="ENSBTAT00000024880.5">
    <property type="protein sequence ID" value="ENSBTAP00000024880.5"/>
    <property type="gene ID" value="ENSBTAG00000018694.6"/>
</dbReference>
<dbReference type="GeneID" id="531552"/>
<dbReference type="KEGG" id="bta:531552"/>
<dbReference type="CTD" id="79611"/>
<dbReference type="VEuPathDB" id="HostDB:ENSBTAG00000018694"/>
<dbReference type="VGNC" id="VGNC:25572">
    <property type="gene designation" value="ACSS3"/>
</dbReference>
<dbReference type="eggNOG" id="KOG1175">
    <property type="taxonomic scope" value="Eukaryota"/>
</dbReference>
<dbReference type="GeneTree" id="ENSGT00940000157479"/>
<dbReference type="InParanoid" id="A7MB45"/>
<dbReference type="OMA" id="FIMGRTD"/>
<dbReference type="OrthoDB" id="10253869at2759"/>
<dbReference type="Reactome" id="R-BTA-77111">
    <property type="pathway name" value="Synthesis of Ketone Bodies"/>
</dbReference>
<dbReference type="Proteomes" id="UP000009136">
    <property type="component" value="Chromosome 5"/>
</dbReference>
<dbReference type="Bgee" id="ENSBTAG00000018694">
    <property type="expression patterns" value="Expressed in oviduct epithelium and 103 other cell types or tissues"/>
</dbReference>
<dbReference type="GO" id="GO:0005759">
    <property type="term" value="C:mitochondrial matrix"/>
    <property type="evidence" value="ECO:0000250"/>
    <property type="project" value="UniProtKB"/>
</dbReference>
<dbReference type="GO" id="GO:0003987">
    <property type="term" value="F:acetate-CoA ligase activity"/>
    <property type="evidence" value="ECO:0000250"/>
    <property type="project" value="UniProtKB"/>
</dbReference>
<dbReference type="GO" id="GO:0005524">
    <property type="term" value="F:ATP binding"/>
    <property type="evidence" value="ECO:0007669"/>
    <property type="project" value="UniProtKB-KW"/>
</dbReference>
<dbReference type="GO" id="GO:0031956">
    <property type="term" value="F:medium-chain fatty acid-CoA ligase activity"/>
    <property type="evidence" value="ECO:0000250"/>
    <property type="project" value="UniProtKB"/>
</dbReference>
<dbReference type="GO" id="GO:0050218">
    <property type="term" value="F:propionate-CoA ligase activity"/>
    <property type="evidence" value="ECO:0000250"/>
    <property type="project" value="UniProtKB"/>
</dbReference>
<dbReference type="GO" id="GO:0006629">
    <property type="term" value="P:lipid metabolic process"/>
    <property type="evidence" value="ECO:0007669"/>
    <property type="project" value="UniProtKB-KW"/>
</dbReference>
<dbReference type="CDD" id="cd05967">
    <property type="entry name" value="PrpE"/>
    <property type="match status" value="1"/>
</dbReference>
<dbReference type="FunFam" id="3.40.50.12780:FF:000011">
    <property type="entry name" value="Acetyl-coenzyme A synthetase 2-like, mitochondrial"/>
    <property type="match status" value="1"/>
</dbReference>
<dbReference type="FunFam" id="3.30.300.30:FF:000017">
    <property type="entry name" value="Acyl-CoA synthetase short-chain family member 3"/>
    <property type="match status" value="1"/>
</dbReference>
<dbReference type="Gene3D" id="3.30.300.30">
    <property type="match status" value="1"/>
</dbReference>
<dbReference type="Gene3D" id="3.40.50.12780">
    <property type="entry name" value="N-terminal domain of ligase-like"/>
    <property type="match status" value="1"/>
</dbReference>
<dbReference type="InterPro" id="IPR032387">
    <property type="entry name" value="ACAS_N"/>
</dbReference>
<dbReference type="InterPro" id="IPR025110">
    <property type="entry name" value="AMP-bd_C"/>
</dbReference>
<dbReference type="InterPro" id="IPR045851">
    <property type="entry name" value="AMP-bd_C_sf"/>
</dbReference>
<dbReference type="InterPro" id="IPR020845">
    <property type="entry name" value="AMP-binding_CS"/>
</dbReference>
<dbReference type="InterPro" id="IPR000873">
    <property type="entry name" value="AMP-dep_synth/lig_dom"/>
</dbReference>
<dbReference type="InterPro" id="IPR042099">
    <property type="entry name" value="ANL_N_sf"/>
</dbReference>
<dbReference type="PANTHER" id="PTHR43347">
    <property type="entry name" value="ACYL-COA SYNTHETASE"/>
    <property type="match status" value="1"/>
</dbReference>
<dbReference type="PANTHER" id="PTHR43347:SF3">
    <property type="entry name" value="ACYL-COA SYNTHETASE SHORT-CHAIN FAMILY MEMBER 3, MITOCHONDRIAL"/>
    <property type="match status" value="1"/>
</dbReference>
<dbReference type="Pfam" id="PF16177">
    <property type="entry name" value="ACAS_N"/>
    <property type="match status" value="1"/>
</dbReference>
<dbReference type="Pfam" id="PF00501">
    <property type="entry name" value="AMP-binding"/>
    <property type="match status" value="1"/>
</dbReference>
<dbReference type="Pfam" id="PF13193">
    <property type="entry name" value="AMP-binding_C"/>
    <property type="match status" value="1"/>
</dbReference>
<dbReference type="SUPFAM" id="SSF56801">
    <property type="entry name" value="Acetyl-CoA synthetase-like"/>
    <property type="match status" value="1"/>
</dbReference>
<dbReference type="PROSITE" id="PS00455">
    <property type="entry name" value="AMP_BINDING"/>
    <property type="match status" value="1"/>
</dbReference>
<protein>
    <recommendedName>
        <fullName>Acyl-CoA synthetase short-chain family member 3, mitochondrial</fullName>
        <ecNumber evidence="2">6.2.1.1</ecNumber>
    </recommendedName>
    <alternativeName>
        <fullName>Acetate--CoA ligase 3</fullName>
    </alternativeName>
    <alternativeName>
        <fullName>Propionate--CoA ligase</fullName>
        <ecNumber evidence="2">6.2.1.17</ecNumber>
    </alternativeName>
</protein>
<name>ACSS3_BOVIN</name>
<sequence>MKPSWLQCRKVTGAGGLGGSLPASSPARGAGPARRAYVAPGPRGALGGRGCRALSSGGGEYKTHFAASVTDPERFWGKAAEQISWYKPWTKTLENRHSPSTSWFVEGMLNICYNAIDRHIENGKGDKIAIIYDSPVTNTKATITYKEVLEQVSKLAGVLVKHGVKKGDTVVIYMPMIPQAMYAMLACARIGAIHSLIFGGFASKELSTRIDHAKPKLVITASFGIEPGRKVEYVPLVEEALRIGQHKPDKVLIYNRPHTDMVPLAPGYYLDWDEELSKAQSHDCVPVLSEHPLYILYTSGTTGLPKGVVRPTGGYAVMLNWSMSSIYGLKPGEVWWAASDLGWVVGHSYICYGPLLHGNTTVLYEGKPVGTPDAGAYFRVLAEHGVAALFTAPTAIRAIRQQDPGAALGKQYSLTRFKTLFVAGERCDVETLEWSKKVFRVPVLDHWWQTETGSPITASCIGLGNSKTPPPGQAGKSVPGYNVMILDDNMQKLKARCLGNIVVKLPLPPGAFSGLWKNQEAFKHLYFEKFPGYYDTMDAGYMDEEGYVYVMSRVDDVINVAGHRISAGALEESILSLGIVADCAVVGKEDSLKGHIPLALCVLKKDINTTEEHVLEEIVKHVRQTIGPVAAFRKAVFVKQLPKTRSGKIPRSTLSALVNGKPYKVSPTIEDPGIFEHIEAMLKQAS</sequence>
<reference key="1">
    <citation type="submission" date="2007-07" db="EMBL/GenBank/DDBJ databases">
        <authorList>
            <consortium name="NIH - Mammalian Gene Collection (MGC) project"/>
        </authorList>
    </citation>
    <scope>NUCLEOTIDE SEQUENCE [LARGE SCALE MRNA]</scope>
    <source>
        <strain>Hereford</strain>
        <tissue>Hypothalamus</tissue>
    </source>
</reference>
<gene>
    <name type="primary">ACSS3</name>
</gene>